<proteinExistence type="evidence at transcript level"/>
<sequence>MARKIGSVRIEVLEGRNLVPMDSNGMSDPYGVVIVGDKKKKTKAIKHTLFPKWESDNCFEFDIDVNLLAITVEVYDWDRFSSDDRMGLTNIPVSQIQEYIVDTTKWYTLQPMKPNDKVSGEIKLKIRFDKDKTLPPPEKSPFIKAIKDNDTQAIELMMNKAKLDYTICDNEGTPAIHIAAASNNIPLITMLLKGSDARVSIRDQHGNTPLHLFVQKNVSLNCEDIINKLIERGCGINDENNLGETALHKACLATVVQKTTIVEQLLQKGAIINHQTKTRDTPLHYAIKVGKVEFVRFFLQNGANVMIEGGKPSRTPLELAKELGNPQIISKVEKVIEISDWLNELQLETLIPKFIKNEIYMDVITDINEGTLDLLNISVSGQRTKLLRAVRKIKDPLSLSSNSSLRSNSLIHVENDNNNNNNNNNNNNNSQEQCNINNDSLGSGNRNSGGFKAQNQNNTLNNNNVESKSTGNLNSLKNIHNVNNDNNEDKKNNILSPNPIPASSSAPAAPSPVAIGSNTTTTTTTAIAATTTTLTTTATTEDKTTTESTTPPQQQQQTTTITPTKTTTVTPEGPNLDVSDLSVLKHINLDSDSWVIDEKTLTYNVLLGTGASGKVYKGTFNGQEVAIKVLKSFTDKKDIAEFKKEFQIVSALRAPGVVYFHGAGIKDKLCIVMEYCSRGSLYHILKDDTTQFTWDNFFNLGTQAINSLDSLHNWTPQVLHRDLKSLNLLVTENWTVKICDFGLSRFDTGSNLETLGKLRGTYAYVAPEVYFGKKYTTKSDVYSMGIILWEMTYRCIKGTHLLPYAEYPHLKFDYQILISSAKKDVRPTTPENAPESLKNLIARTLVKDSTLRPTTLEFYEELLKIRDEYNANREQWDSIRTIPPQQLPKPIINEEIIPSIDSNNINNNNNNNNTTVTSEKPKLRYQPSNSNLLNNNNNNNNNDSDNNISEPATTDSITKPISKVKEQLLTRTRSSSSPMEPKSIKK</sequence>
<name>Y9848_DICDI</name>
<accession>Q55A55</accession>
<accession>Q86B19</accession>
<gene>
    <name type="ORF">DDB_G0272092</name>
</gene>
<organism>
    <name type="scientific">Dictyostelium discoideum</name>
    <name type="common">Social amoeba</name>
    <dbReference type="NCBI Taxonomy" id="44689"/>
    <lineage>
        <taxon>Eukaryota</taxon>
        <taxon>Amoebozoa</taxon>
        <taxon>Evosea</taxon>
        <taxon>Eumycetozoa</taxon>
        <taxon>Dictyostelia</taxon>
        <taxon>Dictyosteliales</taxon>
        <taxon>Dictyosteliaceae</taxon>
        <taxon>Dictyostelium</taxon>
    </lineage>
</organism>
<feature type="chain" id="PRO_0000355159" description="Probable serine/threonine-protein kinase DDB_G0272092">
    <location>
        <begin position="1"/>
        <end position="986"/>
    </location>
</feature>
<feature type="domain" description="C2" evidence="1">
    <location>
        <begin position="1"/>
        <end position="107"/>
    </location>
</feature>
<feature type="repeat" description="ANK 1">
    <location>
        <begin position="137"/>
        <end position="167"/>
    </location>
</feature>
<feature type="repeat" description="ANK 2">
    <location>
        <begin position="171"/>
        <end position="201"/>
    </location>
</feature>
<feature type="repeat" description="ANK 3">
    <location>
        <begin position="205"/>
        <end position="238"/>
    </location>
</feature>
<feature type="repeat" description="ANK 4">
    <location>
        <begin position="242"/>
        <end position="274"/>
    </location>
</feature>
<feature type="repeat" description="ANK 5">
    <location>
        <begin position="278"/>
        <end position="307"/>
    </location>
</feature>
<feature type="repeat" description="ANK 6">
    <location>
        <begin position="312"/>
        <end position="344"/>
    </location>
</feature>
<feature type="domain" description="SAM" evidence="3">
    <location>
        <begin position="333"/>
        <end position="396"/>
    </location>
</feature>
<feature type="domain" description="Protein kinase" evidence="2">
    <location>
        <begin position="601"/>
        <end position="870"/>
    </location>
</feature>
<feature type="region of interest" description="Disordered" evidence="5">
    <location>
        <begin position="412"/>
        <end position="520"/>
    </location>
</feature>
<feature type="region of interest" description="Disordered" evidence="5">
    <location>
        <begin position="532"/>
        <end position="574"/>
    </location>
</feature>
<feature type="region of interest" description="Disordered" evidence="5">
    <location>
        <begin position="901"/>
        <end position="986"/>
    </location>
</feature>
<feature type="compositionally biased region" description="Low complexity" evidence="5">
    <location>
        <begin position="412"/>
        <end position="438"/>
    </location>
</feature>
<feature type="compositionally biased region" description="Polar residues" evidence="5">
    <location>
        <begin position="439"/>
        <end position="448"/>
    </location>
</feature>
<feature type="compositionally biased region" description="Low complexity" evidence="5">
    <location>
        <begin position="454"/>
        <end position="464"/>
    </location>
</feature>
<feature type="compositionally biased region" description="Polar residues" evidence="5">
    <location>
        <begin position="465"/>
        <end position="476"/>
    </location>
</feature>
<feature type="compositionally biased region" description="Low complexity" evidence="5">
    <location>
        <begin position="493"/>
        <end position="520"/>
    </location>
</feature>
<feature type="compositionally biased region" description="Low complexity" evidence="5">
    <location>
        <begin position="546"/>
        <end position="571"/>
    </location>
</feature>
<feature type="compositionally biased region" description="Low complexity" evidence="5">
    <location>
        <begin position="901"/>
        <end position="913"/>
    </location>
</feature>
<feature type="compositionally biased region" description="Low complexity" evidence="5">
    <location>
        <begin position="928"/>
        <end position="947"/>
    </location>
</feature>
<feature type="compositionally biased region" description="Polar residues" evidence="5">
    <location>
        <begin position="948"/>
        <end position="959"/>
    </location>
</feature>
<feature type="compositionally biased region" description="Polar residues" evidence="5">
    <location>
        <begin position="969"/>
        <end position="978"/>
    </location>
</feature>
<feature type="active site" description="Proton acceptor" evidence="2 4">
    <location>
        <position position="722"/>
    </location>
</feature>
<feature type="binding site" evidence="1">
    <location>
        <position position="22"/>
    </location>
    <ligand>
        <name>Ca(2+)</name>
        <dbReference type="ChEBI" id="CHEBI:29108"/>
        <label>1</label>
    </ligand>
</feature>
<feature type="binding site" evidence="1">
    <location>
        <position position="22"/>
    </location>
    <ligand>
        <name>Ca(2+)</name>
        <dbReference type="ChEBI" id="CHEBI:29108"/>
        <label>2</label>
    </ligand>
</feature>
<feature type="binding site" evidence="1">
    <location>
        <position position="28"/>
    </location>
    <ligand>
        <name>Ca(2+)</name>
        <dbReference type="ChEBI" id="CHEBI:29108"/>
        <label>1</label>
    </ligand>
</feature>
<feature type="binding site" evidence="1">
    <location>
        <position position="76"/>
    </location>
    <ligand>
        <name>Ca(2+)</name>
        <dbReference type="ChEBI" id="CHEBI:29108"/>
        <label>1</label>
    </ligand>
</feature>
<feature type="binding site" evidence="1">
    <location>
        <position position="76"/>
    </location>
    <ligand>
        <name>Ca(2+)</name>
        <dbReference type="ChEBI" id="CHEBI:29108"/>
        <label>2</label>
    </ligand>
</feature>
<feature type="binding site" evidence="1">
    <location>
        <position position="78"/>
    </location>
    <ligand>
        <name>Ca(2+)</name>
        <dbReference type="ChEBI" id="CHEBI:29108"/>
        <label>1</label>
    </ligand>
</feature>
<feature type="binding site" evidence="1">
    <location>
        <position position="78"/>
    </location>
    <ligand>
        <name>Ca(2+)</name>
        <dbReference type="ChEBI" id="CHEBI:29108"/>
        <label>2</label>
    </ligand>
</feature>
<feature type="binding site" evidence="1">
    <location>
        <position position="78"/>
    </location>
    <ligand>
        <name>Ca(2+)</name>
        <dbReference type="ChEBI" id="CHEBI:29108"/>
        <label>3</label>
    </ligand>
</feature>
<feature type="binding site" evidence="1">
    <location>
        <position position="81"/>
    </location>
    <ligand>
        <name>Ca(2+)</name>
        <dbReference type="ChEBI" id="CHEBI:29108"/>
        <label>3</label>
    </ligand>
</feature>
<feature type="binding site" evidence="1">
    <location>
        <position position="84"/>
    </location>
    <ligand>
        <name>Ca(2+)</name>
        <dbReference type="ChEBI" id="CHEBI:29108"/>
        <label>2</label>
    </ligand>
</feature>
<feature type="binding site" evidence="1">
    <location>
        <position position="84"/>
    </location>
    <ligand>
        <name>Ca(2+)</name>
        <dbReference type="ChEBI" id="CHEBI:29108"/>
        <label>3</label>
    </ligand>
</feature>
<feature type="binding site" evidence="2">
    <location>
        <begin position="607"/>
        <end position="615"/>
    </location>
    <ligand>
        <name>ATP</name>
        <dbReference type="ChEBI" id="CHEBI:30616"/>
    </ligand>
</feature>
<feature type="binding site" evidence="2">
    <location>
        <position position="628"/>
    </location>
    <ligand>
        <name>ATP</name>
        <dbReference type="ChEBI" id="CHEBI:30616"/>
    </ligand>
</feature>
<comment type="catalytic activity">
    <reaction>
        <text>L-seryl-[protein] + ATP = O-phospho-L-seryl-[protein] + ADP + H(+)</text>
        <dbReference type="Rhea" id="RHEA:17989"/>
        <dbReference type="Rhea" id="RHEA-COMP:9863"/>
        <dbReference type="Rhea" id="RHEA-COMP:11604"/>
        <dbReference type="ChEBI" id="CHEBI:15378"/>
        <dbReference type="ChEBI" id="CHEBI:29999"/>
        <dbReference type="ChEBI" id="CHEBI:30616"/>
        <dbReference type="ChEBI" id="CHEBI:83421"/>
        <dbReference type="ChEBI" id="CHEBI:456216"/>
        <dbReference type="EC" id="2.7.11.1"/>
    </reaction>
</comment>
<comment type="catalytic activity">
    <reaction>
        <text>L-threonyl-[protein] + ATP = O-phospho-L-threonyl-[protein] + ADP + H(+)</text>
        <dbReference type="Rhea" id="RHEA:46608"/>
        <dbReference type="Rhea" id="RHEA-COMP:11060"/>
        <dbReference type="Rhea" id="RHEA-COMP:11605"/>
        <dbReference type="ChEBI" id="CHEBI:15378"/>
        <dbReference type="ChEBI" id="CHEBI:30013"/>
        <dbReference type="ChEBI" id="CHEBI:30616"/>
        <dbReference type="ChEBI" id="CHEBI:61977"/>
        <dbReference type="ChEBI" id="CHEBI:456216"/>
        <dbReference type="EC" id="2.7.11.1"/>
    </reaction>
</comment>
<comment type="cofactor">
    <cofactor evidence="1">
        <name>Ca(2+)</name>
        <dbReference type="ChEBI" id="CHEBI:29108"/>
    </cofactor>
    <text evidence="1">Binds 3 Ca(2+) ions per C2 domain.</text>
</comment>
<comment type="similarity">
    <text evidence="6">Belongs to the protein kinase superfamily. TKL Ser/Thr protein kinase family.</text>
</comment>
<dbReference type="EC" id="2.7.11.1"/>
<dbReference type="EMBL" id="AAFI02000007">
    <property type="protein sequence ID" value="EAL71407.1"/>
    <property type="molecule type" value="Genomic_DNA"/>
</dbReference>
<dbReference type="RefSeq" id="XP_645338.1">
    <property type="nucleotide sequence ID" value="XM_640246.1"/>
</dbReference>
<dbReference type="SMR" id="Q55A55"/>
<dbReference type="FunCoup" id="Q55A55">
    <property type="interactions" value="1"/>
</dbReference>
<dbReference type="PaxDb" id="44689-DDB0229848"/>
<dbReference type="EnsemblProtists" id="EAL71407">
    <property type="protein sequence ID" value="EAL71407"/>
    <property type="gene ID" value="DDB_G0272092"/>
</dbReference>
<dbReference type="GeneID" id="8618299"/>
<dbReference type="KEGG" id="ddi:DDB_G0272092"/>
<dbReference type="dictyBase" id="DDB_G0272092"/>
<dbReference type="VEuPathDB" id="AmoebaDB:DDB_G0272092"/>
<dbReference type="eggNOG" id="KOG0192">
    <property type="taxonomic scope" value="Eukaryota"/>
</dbReference>
<dbReference type="HOGENOM" id="CLU_302559_0_0_1"/>
<dbReference type="InParanoid" id="Q55A55"/>
<dbReference type="OMA" id="NEIYMDV"/>
<dbReference type="PhylomeDB" id="Q55A55"/>
<dbReference type="Reactome" id="R-DDI-5673000">
    <property type="pathway name" value="RAF activation"/>
</dbReference>
<dbReference type="Reactome" id="R-DDI-5675221">
    <property type="pathway name" value="Negative regulation of MAPK pathway"/>
</dbReference>
<dbReference type="PRO" id="PR:Q55A55"/>
<dbReference type="Proteomes" id="UP000002195">
    <property type="component" value="Chromosome 2"/>
</dbReference>
<dbReference type="GO" id="GO:0005737">
    <property type="term" value="C:cytoplasm"/>
    <property type="evidence" value="ECO:0000318"/>
    <property type="project" value="GO_Central"/>
</dbReference>
<dbReference type="GO" id="GO:0005524">
    <property type="term" value="F:ATP binding"/>
    <property type="evidence" value="ECO:0007669"/>
    <property type="project" value="UniProtKB-KW"/>
</dbReference>
<dbReference type="GO" id="GO:0046872">
    <property type="term" value="F:metal ion binding"/>
    <property type="evidence" value="ECO:0007669"/>
    <property type="project" value="UniProtKB-KW"/>
</dbReference>
<dbReference type="GO" id="GO:0004672">
    <property type="term" value="F:protein kinase activity"/>
    <property type="evidence" value="ECO:0000318"/>
    <property type="project" value="GO_Central"/>
</dbReference>
<dbReference type="GO" id="GO:0106310">
    <property type="term" value="F:protein serine kinase activity"/>
    <property type="evidence" value="ECO:0007669"/>
    <property type="project" value="RHEA"/>
</dbReference>
<dbReference type="GO" id="GO:0004674">
    <property type="term" value="F:protein serine/threonine kinase activity"/>
    <property type="evidence" value="ECO:0007669"/>
    <property type="project" value="UniProtKB-KW"/>
</dbReference>
<dbReference type="GO" id="GO:0007165">
    <property type="term" value="P:signal transduction"/>
    <property type="evidence" value="ECO:0000318"/>
    <property type="project" value="GO_Central"/>
</dbReference>
<dbReference type="CDD" id="cd00030">
    <property type="entry name" value="C2"/>
    <property type="match status" value="1"/>
</dbReference>
<dbReference type="CDD" id="cd13999">
    <property type="entry name" value="STKc_MAP3K-like"/>
    <property type="match status" value="1"/>
</dbReference>
<dbReference type="Gene3D" id="1.25.40.20">
    <property type="entry name" value="Ankyrin repeat-containing domain"/>
    <property type="match status" value="1"/>
</dbReference>
<dbReference type="Gene3D" id="2.60.40.150">
    <property type="entry name" value="C2 domain"/>
    <property type="match status" value="1"/>
</dbReference>
<dbReference type="Gene3D" id="3.30.200.20">
    <property type="entry name" value="Phosphorylase Kinase, domain 1"/>
    <property type="match status" value="1"/>
</dbReference>
<dbReference type="Gene3D" id="1.10.150.50">
    <property type="entry name" value="Transcription Factor, Ets-1"/>
    <property type="match status" value="1"/>
</dbReference>
<dbReference type="Gene3D" id="1.10.510.10">
    <property type="entry name" value="Transferase(Phosphotransferase) domain 1"/>
    <property type="match status" value="1"/>
</dbReference>
<dbReference type="InterPro" id="IPR002110">
    <property type="entry name" value="Ankyrin_rpt"/>
</dbReference>
<dbReference type="InterPro" id="IPR036770">
    <property type="entry name" value="Ankyrin_rpt-contain_sf"/>
</dbReference>
<dbReference type="InterPro" id="IPR000008">
    <property type="entry name" value="C2_dom"/>
</dbReference>
<dbReference type="InterPro" id="IPR035892">
    <property type="entry name" value="C2_domain_sf"/>
</dbReference>
<dbReference type="InterPro" id="IPR011009">
    <property type="entry name" value="Kinase-like_dom_sf"/>
</dbReference>
<dbReference type="InterPro" id="IPR000719">
    <property type="entry name" value="Prot_kinase_dom"/>
</dbReference>
<dbReference type="InterPro" id="IPR017441">
    <property type="entry name" value="Protein_kinase_ATP_BS"/>
</dbReference>
<dbReference type="InterPro" id="IPR001660">
    <property type="entry name" value="SAM"/>
</dbReference>
<dbReference type="InterPro" id="IPR013761">
    <property type="entry name" value="SAM/pointed_sf"/>
</dbReference>
<dbReference type="InterPro" id="IPR001245">
    <property type="entry name" value="Ser-Thr/Tyr_kinase_cat_dom"/>
</dbReference>
<dbReference type="InterPro" id="IPR008271">
    <property type="entry name" value="Ser/Thr_kinase_AS"/>
</dbReference>
<dbReference type="InterPro" id="IPR051681">
    <property type="entry name" value="Ser/Thr_Kinases-Pseudokinases"/>
</dbReference>
<dbReference type="PANTHER" id="PTHR44329:SF288">
    <property type="entry name" value="MITOGEN-ACTIVATED PROTEIN KINASE KINASE KINASE 20"/>
    <property type="match status" value="1"/>
</dbReference>
<dbReference type="PANTHER" id="PTHR44329">
    <property type="entry name" value="SERINE/THREONINE-PROTEIN KINASE TNNI3K-RELATED"/>
    <property type="match status" value="1"/>
</dbReference>
<dbReference type="Pfam" id="PF12796">
    <property type="entry name" value="Ank_2"/>
    <property type="match status" value="1"/>
</dbReference>
<dbReference type="Pfam" id="PF13637">
    <property type="entry name" value="Ank_4"/>
    <property type="match status" value="1"/>
</dbReference>
<dbReference type="Pfam" id="PF00168">
    <property type="entry name" value="C2"/>
    <property type="match status" value="1"/>
</dbReference>
<dbReference type="Pfam" id="PF07714">
    <property type="entry name" value="PK_Tyr_Ser-Thr"/>
    <property type="match status" value="1"/>
</dbReference>
<dbReference type="Pfam" id="PF00536">
    <property type="entry name" value="SAM_1"/>
    <property type="match status" value="1"/>
</dbReference>
<dbReference type="SMART" id="SM00248">
    <property type="entry name" value="ANK"/>
    <property type="match status" value="5"/>
</dbReference>
<dbReference type="SMART" id="SM00239">
    <property type="entry name" value="C2"/>
    <property type="match status" value="1"/>
</dbReference>
<dbReference type="SMART" id="SM00220">
    <property type="entry name" value="S_TKc"/>
    <property type="match status" value="1"/>
</dbReference>
<dbReference type="SUPFAM" id="SSF48403">
    <property type="entry name" value="Ankyrin repeat"/>
    <property type="match status" value="1"/>
</dbReference>
<dbReference type="SUPFAM" id="SSF49562">
    <property type="entry name" value="C2 domain (Calcium/lipid-binding domain, CaLB)"/>
    <property type="match status" value="1"/>
</dbReference>
<dbReference type="SUPFAM" id="SSF56112">
    <property type="entry name" value="Protein kinase-like (PK-like)"/>
    <property type="match status" value="1"/>
</dbReference>
<dbReference type="SUPFAM" id="SSF47769">
    <property type="entry name" value="SAM/Pointed domain"/>
    <property type="match status" value="1"/>
</dbReference>
<dbReference type="PROSITE" id="PS50297">
    <property type="entry name" value="ANK_REP_REGION"/>
    <property type="match status" value="1"/>
</dbReference>
<dbReference type="PROSITE" id="PS50088">
    <property type="entry name" value="ANK_REPEAT"/>
    <property type="match status" value="3"/>
</dbReference>
<dbReference type="PROSITE" id="PS50004">
    <property type="entry name" value="C2"/>
    <property type="match status" value="1"/>
</dbReference>
<dbReference type="PROSITE" id="PS00107">
    <property type="entry name" value="PROTEIN_KINASE_ATP"/>
    <property type="match status" value="1"/>
</dbReference>
<dbReference type="PROSITE" id="PS50011">
    <property type="entry name" value="PROTEIN_KINASE_DOM"/>
    <property type="match status" value="1"/>
</dbReference>
<dbReference type="PROSITE" id="PS00108">
    <property type="entry name" value="PROTEIN_KINASE_ST"/>
    <property type="match status" value="1"/>
</dbReference>
<dbReference type="PROSITE" id="PS50105">
    <property type="entry name" value="SAM_DOMAIN"/>
    <property type="match status" value="1"/>
</dbReference>
<evidence type="ECO:0000255" key="1">
    <source>
        <dbReference type="PROSITE-ProRule" id="PRU00041"/>
    </source>
</evidence>
<evidence type="ECO:0000255" key="2">
    <source>
        <dbReference type="PROSITE-ProRule" id="PRU00159"/>
    </source>
</evidence>
<evidence type="ECO:0000255" key="3">
    <source>
        <dbReference type="PROSITE-ProRule" id="PRU00184"/>
    </source>
</evidence>
<evidence type="ECO:0000255" key="4">
    <source>
        <dbReference type="PROSITE-ProRule" id="PRU10027"/>
    </source>
</evidence>
<evidence type="ECO:0000256" key="5">
    <source>
        <dbReference type="SAM" id="MobiDB-lite"/>
    </source>
</evidence>
<evidence type="ECO:0000305" key="6"/>
<protein>
    <recommendedName>
        <fullName>Probable serine/threonine-protein kinase DDB_G0272092</fullName>
        <ecNumber>2.7.11.1</ecNumber>
    </recommendedName>
</protein>
<reference key="1">
    <citation type="journal article" date="2002" name="Nature">
        <title>Sequence and analysis of chromosome 2 of Dictyostelium discoideum.</title>
        <authorList>
            <person name="Gloeckner G."/>
            <person name="Eichinger L."/>
            <person name="Szafranski K."/>
            <person name="Pachebat J.A."/>
            <person name="Bankier A.T."/>
            <person name="Dear P.H."/>
            <person name="Lehmann R."/>
            <person name="Baumgart C."/>
            <person name="Parra G."/>
            <person name="Abril J.F."/>
            <person name="Guigo R."/>
            <person name="Kumpf K."/>
            <person name="Tunggal B."/>
            <person name="Cox E.C."/>
            <person name="Quail M.A."/>
            <person name="Platzer M."/>
            <person name="Rosenthal A."/>
            <person name="Noegel A.A."/>
        </authorList>
    </citation>
    <scope>NUCLEOTIDE SEQUENCE [LARGE SCALE GENOMIC DNA]</scope>
    <source>
        <strain>AX4</strain>
    </source>
</reference>
<reference key="2">
    <citation type="journal article" date="2005" name="Nature">
        <title>The genome of the social amoeba Dictyostelium discoideum.</title>
        <authorList>
            <person name="Eichinger L."/>
            <person name="Pachebat J.A."/>
            <person name="Gloeckner G."/>
            <person name="Rajandream M.A."/>
            <person name="Sucgang R."/>
            <person name="Berriman M."/>
            <person name="Song J."/>
            <person name="Olsen R."/>
            <person name="Szafranski K."/>
            <person name="Xu Q."/>
            <person name="Tunggal B."/>
            <person name="Kummerfeld S."/>
            <person name="Madera M."/>
            <person name="Konfortov B.A."/>
            <person name="Rivero F."/>
            <person name="Bankier A.T."/>
            <person name="Lehmann R."/>
            <person name="Hamlin N."/>
            <person name="Davies R."/>
            <person name="Gaudet P."/>
            <person name="Fey P."/>
            <person name="Pilcher K."/>
            <person name="Chen G."/>
            <person name="Saunders D."/>
            <person name="Sodergren E.J."/>
            <person name="Davis P."/>
            <person name="Kerhornou A."/>
            <person name="Nie X."/>
            <person name="Hall N."/>
            <person name="Anjard C."/>
            <person name="Hemphill L."/>
            <person name="Bason N."/>
            <person name="Farbrother P."/>
            <person name="Desany B."/>
            <person name="Just E."/>
            <person name="Morio T."/>
            <person name="Rost R."/>
            <person name="Churcher C.M."/>
            <person name="Cooper J."/>
            <person name="Haydock S."/>
            <person name="van Driessche N."/>
            <person name="Cronin A."/>
            <person name="Goodhead I."/>
            <person name="Muzny D.M."/>
            <person name="Mourier T."/>
            <person name="Pain A."/>
            <person name="Lu M."/>
            <person name="Harper D."/>
            <person name="Lindsay R."/>
            <person name="Hauser H."/>
            <person name="James K.D."/>
            <person name="Quiles M."/>
            <person name="Madan Babu M."/>
            <person name="Saito T."/>
            <person name="Buchrieser C."/>
            <person name="Wardroper A."/>
            <person name="Felder M."/>
            <person name="Thangavelu M."/>
            <person name="Johnson D."/>
            <person name="Knights A."/>
            <person name="Loulseged H."/>
            <person name="Mungall K.L."/>
            <person name="Oliver K."/>
            <person name="Price C."/>
            <person name="Quail M.A."/>
            <person name="Urushihara H."/>
            <person name="Hernandez J."/>
            <person name="Rabbinowitsch E."/>
            <person name="Steffen D."/>
            <person name="Sanders M."/>
            <person name="Ma J."/>
            <person name="Kohara Y."/>
            <person name="Sharp S."/>
            <person name="Simmonds M.N."/>
            <person name="Spiegler S."/>
            <person name="Tivey A."/>
            <person name="Sugano S."/>
            <person name="White B."/>
            <person name="Walker D."/>
            <person name="Woodward J.R."/>
            <person name="Winckler T."/>
            <person name="Tanaka Y."/>
            <person name="Shaulsky G."/>
            <person name="Schleicher M."/>
            <person name="Weinstock G.M."/>
            <person name="Rosenthal A."/>
            <person name="Cox E.C."/>
            <person name="Chisholm R.L."/>
            <person name="Gibbs R.A."/>
            <person name="Loomis W.F."/>
            <person name="Platzer M."/>
            <person name="Kay R.R."/>
            <person name="Williams J.G."/>
            <person name="Dear P.H."/>
            <person name="Noegel A.A."/>
            <person name="Barrell B.G."/>
            <person name="Kuspa A."/>
        </authorList>
    </citation>
    <scope>NUCLEOTIDE SEQUENCE [LARGE SCALE GENOMIC DNA]</scope>
    <source>
        <strain>AX4</strain>
    </source>
</reference>
<reference key="3">
    <citation type="journal article" date="2008" name="BMC Microbiol.">
        <title>Dictyostelium transcriptional responses to Pseudomonas aeruginosa: common and specific effects from PAO1 and PA14 strains.</title>
        <authorList>
            <person name="Carilla-Latorre S."/>
            <person name="Calvo-Garrido J."/>
            <person name="Bloomfield G."/>
            <person name="Skelton J."/>
            <person name="Kay R.R."/>
            <person name="Ivens A."/>
            <person name="Martinez J.L."/>
            <person name="Escalante R."/>
        </authorList>
    </citation>
    <scope>INDUCTION [LARGE SCALE ANALYSIS]</scope>
</reference>
<keyword id="KW-0040">ANK repeat</keyword>
<keyword id="KW-0067">ATP-binding</keyword>
<keyword id="KW-0106">Calcium</keyword>
<keyword id="KW-0418">Kinase</keyword>
<keyword id="KW-0479">Metal-binding</keyword>
<keyword id="KW-0547">Nucleotide-binding</keyword>
<keyword id="KW-1185">Reference proteome</keyword>
<keyword id="KW-0677">Repeat</keyword>
<keyword id="KW-0723">Serine/threonine-protein kinase</keyword>
<keyword id="KW-0808">Transferase</keyword>